<name>Y1283_METJA</name>
<gene>
    <name type="ordered locus">MJ1283</name>
</gene>
<dbReference type="EMBL" id="L77117">
    <property type="protein sequence ID" value="AAB99292.1"/>
    <property type="molecule type" value="Genomic_DNA"/>
</dbReference>
<dbReference type="PIR" id="B64460">
    <property type="entry name" value="B64460"/>
</dbReference>
<dbReference type="RefSeq" id="WP_010870798.1">
    <property type="nucleotide sequence ID" value="NC_000909.1"/>
</dbReference>
<dbReference type="SMR" id="Q58679"/>
<dbReference type="STRING" id="243232.MJ_1283"/>
<dbReference type="PaxDb" id="243232-MJ_1283"/>
<dbReference type="EnsemblBacteria" id="AAB99292">
    <property type="protein sequence ID" value="AAB99292"/>
    <property type="gene ID" value="MJ_1283"/>
</dbReference>
<dbReference type="GeneID" id="71696686"/>
<dbReference type="KEGG" id="mja:MJ_1283"/>
<dbReference type="eggNOG" id="arCOG08268">
    <property type="taxonomic scope" value="Archaea"/>
</dbReference>
<dbReference type="HOGENOM" id="CLU_1253591_0_0_2"/>
<dbReference type="InParanoid" id="Q58679"/>
<dbReference type="Proteomes" id="UP000000805">
    <property type="component" value="Chromosome"/>
</dbReference>
<dbReference type="GO" id="GO:0016020">
    <property type="term" value="C:membrane"/>
    <property type="evidence" value="ECO:0007669"/>
    <property type="project" value="UniProtKB-SubCell"/>
</dbReference>
<evidence type="ECO:0000255" key="1"/>
<evidence type="ECO:0000305" key="2"/>
<sequence length="220" mass="25277">MVEMNKRGQFFIIGGVILSIGLILFFLLGFNSYTSDGSYLTVFKMKDVKNSIESCLINSLTSNSNLSKNLDMLKNNYKDEGIEINYKKIIFSNIRYEAKNLTFNFSLYNGNFSYNISNYGFGGAFNGSLNVSNYVFSKNLLLNISENGSVTGSFNITGSYVNVFVYDRFGNLILNETIYNNSNEKSLYYYILNVSKEGILLYLLWQRMFLTTHWQKMYPL</sequence>
<protein>
    <recommendedName>
        <fullName>Uncharacterized protein MJ1283</fullName>
    </recommendedName>
</protein>
<feature type="chain" id="PRO_0000107252" description="Uncharacterized protein MJ1283">
    <location>
        <begin position="1"/>
        <end position="220"/>
    </location>
</feature>
<feature type="transmembrane region" description="Helical" evidence="1">
    <location>
        <begin position="10"/>
        <end position="30"/>
    </location>
</feature>
<comment type="subcellular location">
    <subcellularLocation>
        <location evidence="2">Membrane</location>
        <topology evidence="2">Single-pass membrane protein</topology>
    </subcellularLocation>
</comment>
<proteinExistence type="predicted"/>
<organism>
    <name type="scientific">Methanocaldococcus jannaschii (strain ATCC 43067 / DSM 2661 / JAL-1 / JCM 10045 / NBRC 100440)</name>
    <name type="common">Methanococcus jannaschii</name>
    <dbReference type="NCBI Taxonomy" id="243232"/>
    <lineage>
        <taxon>Archaea</taxon>
        <taxon>Methanobacteriati</taxon>
        <taxon>Methanobacteriota</taxon>
        <taxon>Methanomada group</taxon>
        <taxon>Methanococci</taxon>
        <taxon>Methanococcales</taxon>
        <taxon>Methanocaldococcaceae</taxon>
        <taxon>Methanocaldococcus</taxon>
    </lineage>
</organism>
<accession>Q58679</accession>
<keyword id="KW-0472">Membrane</keyword>
<keyword id="KW-1185">Reference proteome</keyword>
<keyword id="KW-0812">Transmembrane</keyword>
<keyword id="KW-1133">Transmembrane helix</keyword>
<reference key="1">
    <citation type="journal article" date="1996" name="Science">
        <title>Complete genome sequence of the methanogenic archaeon, Methanococcus jannaschii.</title>
        <authorList>
            <person name="Bult C.J."/>
            <person name="White O."/>
            <person name="Olsen G.J."/>
            <person name="Zhou L."/>
            <person name="Fleischmann R.D."/>
            <person name="Sutton G.G."/>
            <person name="Blake J.A."/>
            <person name="FitzGerald L.M."/>
            <person name="Clayton R.A."/>
            <person name="Gocayne J.D."/>
            <person name="Kerlavage A.R."/>
            <person name="Dougherty B.A."/>
            <person name="Tomb J.-F."/>
            <person name="Adams M.D."/>
            <person name="Reich C.I."/>
            <person name="Overbeek R."/>
            <person name="Kirkness E.F."/>
            <person name="Weinstock K.G."/>
            <person name="Merrick J.M."/>
            <person name="Glodek A."/>
            <person name="Scott J.L."/>
            <person name="Geoghagen N.S.M."/>
            <person name="Weidman J.F."/>
            <person name="Fuhrmann J.L."/>
            <person name="Nguyen D."/>
            <person name="Utterback T.R."/>
            <person name="Kelley J.M."/>
            <person name="Peterson J.D."/>
            <person name="Sadow P.W."/>
            <person name="Hanna M.C."/>
            <person name="Cotton M.D."/>
            <person name="Roberts K.M."/>
            <person name="Hurst M.A."/>
            <person name="Kaine B.P."/>
            <person name="Borodovsky M."/>
            <person name="Klenk H.-P."/>
            <person name="Fraser C.M."/>
            <person name="Smith H.O."/>
            <person name="Woese C.R."/>
            <person name="Venter J.C."/>
        </authorList>
    </citation>
    <scope>NUCLEOTIDE SEQUENCE [LARGE SCALE GENOMIC DNA]</scope>
    <source>
        <strain>ATCC 43067 / DSM 2661 / JAL-1 / JCM 10045 / NBRC 100440</strain>
    </source>
</reference>